<accession>Q9BXW4</accession>
<accession>A0PJY8</accession>
<accession>A2RUP0</accession>
<dbReference type="EMBL" id="AF276659">
    <property type="protein sequence ID" value="AAK35152.1"/>
    <property type="molecule type" value="mRNA"/>
</dbReference>
<dbReference type="EMBL" id="BX571673">
    <property type="status" value="NOT_ANNOTATED_CDS"/>
    <property type="molecule type" value="Genomic_DNA"/>
</dbReference>
<dbReference type="EMBL" id="BC127722">
    <property type="protein sequence ID" value="AAI27723.1"/>
    <property type="molecule type" value="mRNA"/>
</dbReference>
<dbReference type="EMBL" id="BC132986">
    <property type="protein sequence ID" value="AAI32987.1"/>
    <property type="molecule type" value="mRNA"/>
</dbReference>
<dbReference type="EMBL" id="BC132988">
    <property type="protein sequence ID" value="AAI32989.1"/>
    <property type="molecule type" value="mRNA"/>
</dbReference>
<dbReference type="CCDS" id="CCDS31074.1"/>
<dbReference type="RefSeq" id="NP_001004343.1">
    <property type="nucleotide sequence ID" value="NM_001004343.3"/>
</dbReference>
<dbReference type="RefSeq" id="XP_005273196.1">
    <property type="nucleotide sequence ID" value="XM_005273139.4"/>
</dbReference>
<dbReference type="RefSeq" id="XP_054192666.1">
    <property type="nucleotide sequence ID" value="XM_054336691.1"/>
</dbReference>
<dbReference type="PDB" id="2NCN">
    <property type="method" value="NMR"/>
    <property type="chains" value="A=1-126"/>
</dbReference>
<dbReference type="PDB" id="3VVW">
    <property type="method" value="X-ray"/>
    <property type="resolution" value="2.50 A"/>
    <property type="chains" value="B=1-126"/>
</dbReference>
<dbReference type="PDB" id="3WAM">
    <property type="method" value="X-ray"/>
    <property type="resolution" value="1.75 A"/>
    <property type="chains" value="A=8-125"/>
</dbReference>
<dbReference type="PDB" id="3WAP">
    <property type="method" value="X-ray"/>
    <property type="resolution" value="3.10 A"/>
    <property type="chains" value="A=8-125"/>
</dbReference>
<dbReference type="PDB" id="5DPW">
    <property type="method" value="X-ray"/>
    <property type="resolution" value="2.19 A"/>
    <property type="chains" value="A/C/E/G/I/K/M/O=8-125"/>
</dbReference>
<dbReference type="PDBsum" id="2NCN"/>
<dbReference type="PDBsum" id="3VVW"/>
<dbReference type="PDBsum" id="3WAM"/>
<dbReference type="PDBsum" id="3WAP"/>
<dbReference type="PDBsum" id="5DPW"/>
<dbReference type="SMR" id="Q9BXW4"/>
<dbReference type="BioGRID" id="136855">
    <property type="interactions" value="74"/>
</dbReference>
<dbReference type="DIP" id="DIP-57020N"/>
<dbReference type="ELM" id="Q9BXW4"/>
<dbReference type="FunCoup" id="Q9BXW4">
    <property type="interactions" value="435"/>
</dbReference>
<dbReference type="IntAct" id="Q9BXW4">
    <property type="interactions" value="189"/>
</dbReference>
<dbReference type="MINT" id="Q9BXW4"/>
<dbReference type="STRING" id="9606.ENSP00000349785"/>
<dbReference type="ChEMBL" id="CHEMBL4879505"/>
<dbReference type="iPTMnet" id="Q9BXW4"/>
<dbReference type="PhosphoSitePlus" id="Q9BXW4"/>
<dbReference type="BioMuta" id="MAP1LC3C"/>
<dbReference type="DMDM" id="84028113"/>
<dbReference type="MassIVE" id="Q9BXW4"/>
<dbReference type="PaxDb" id="9606-ENSP00000349785"/>
<dbReference type="PeptideAtlas" id="Q9BXW4"/>
<dbReference type="Antibodypedia" id="34706">
    <property type="antibodies" value="236 antibodies from 36 providers"/>
</dbReference>
<dbReference type="DNASU" id="440738"/>
<dbReference type="Ensembl" id="ENST00000357246.4">
    <property type="protein sequence ID" value="ENSP00000349785.3"/>
    <property type="gene ID" value="ENSG00000197769.6"/>
</dbReference>
<dbReference type="GeneID" id="440738"/>
<dbReference type="KEGG" id="hsa:440738"/>
<dbReference type="MANE-Select" id="ENST00000357246.4">
    <property type="protein sequence ID" value="ENSP00000349785.3"/>
    <property type="RefSeq nucleotide sequence ID" value="NM_001004343.3"/>
    <property type="RefSeq protein sequence ID" value="NP_001004343.1"/>
</dbReference>
<dbReference type="UCSC" id="uc001hzk.3">
    <property type="organism name" value="human"/>
</dbReference>
<dbReference type="AGR" id="HGNC:13353"/>
<dbReference type="CTD" id="440738"/>
<dbReference type="DisGeNET" id="440738"/>
<dbReference type="GeneCards" id="MAP1LC3C"/>
<dbReference type="HGNC" id="HGNC:13353">
    <property type="gene designation" value="MAP1LC3C"/>
</dbReference>
<dbReference type="HPA" id="ENSG00000197769">
    <property type="expression patterns" value="Tissue enhanced (adipose tissue, breast)"/>
</dbReference>
<dbReference type="MIM" id="609605">
    <property type="type" value="gene"/>
</dbReference>
<dbReference type="neXtProt" id="NX_Q9BXW4"/>
<dbReference type="OpenTargets" id="ENSG00000197769"/>
<dbReference type="PharmGKB" id="PA142671482"/>
<dbReference type="VEuPathDB" id="HostDB:ENSG00000197769"/>
<dbReference type="eggNOG" id="KOG1654">
    <property type="taxonomic scope" value="Eukaryota"/>
</dbReference>
<dbReference type="GeneTree" id="ENSGT00940000161852"/>
<dbReference type="HOGENOM" id="CLU_119276_1_1_1"/>
<dbReference type="InParanoid" id="Q9BXW4"/>
<dbReference type="OMA" id="EMFGCFL"/>
<dbReference type="OrthoDB" id="6738456at2759"/>
<dbReference type="PAN-GO" id="Q9BXW4">
    <property type="GO annotations" value="10 GO annotations based on evolutionary models"/>
</dbReference>
<dbReference type="PhylomeDB" id="Q9BXW4"/>
<dbReference type="TreeFam" id="TF312964"/>
<dbReference type="PathwayCommons" id="Q9BXW4"/>
<dbReference type="Reactome" id="R-HSA-1632852">
    <property type="pathway name" value="Macroautophagy"/>
</dbReference>
<dbReference type="SignaLink" id="Q9BXW4"/>
<dbReference type="SIGNOR" id="Q9BXW4"/>
<dbReference type="BioGRID-ORCS" id="440738">
    <property type="hits" value="8 hits in 1148 CRISPR screens"/>
</dbReference>
<dbReference type="EvolutionaryTrace" id="Q9BXW4"/>
<dbReference type="GenomeRNAi" id="440738"/>
<dbReference type="Pharos" id="Q9BXW4">
    <property type="development level" value="Tbio"/>
</dbReference>
<dbReference type="PRO" id="PR:Q9BXW4"/>
<dbReference type="Proteomes" id="UP000005640">
    <property type="component" value="Chromosome 1"/>
</dbReference>
<dbReference type="RNAct" id="Q9BXW4">
    <property type="molecule type" value="protein"/>
</dbReference>
<dbReference type="Bgee" id="ENSG00000197769">
    <property type="expression patterns" value="Expressed in male germ line stem cell (sensu Vertebrata) in testis and 120 other cell types or tissues"/>
</dbReference>
<dbReference type="GO" id="GO:0005776">
    <property type="term" value="C:autophagosome"/>
    <property type="evidence" value="ECO:0000314"/>
    <property type="project" value="UniProtKB"/>
</dbReference>
<dbReference type="GO" id="GO:0000421">
    <property type="term" value="C:autophagosome membrane"/>
    <property type="evidence" value="ECO:0000318"/>
    <property type="project" value="GO_Central"/>
</dbReference>
<dbReference type="GO" id="GO:0036464">
    <property type="term" value="C:cytoplasmic ribonucleoprotein granule"/>
    <property type="evidence" value="ECO:0000314"/>
    <property type="project" value="HPA"/>
</dbReference>
<dbReference type="GO" id="GO:0031410">
    <property type="term" value="C:cytoplasmic vesicle"/>
    <property type="evidence" value="ECO:0007669"/>
    <property type="project" value="UniProtKB-KW"/>
</dbReference>
<dbReference type="GO" id="GO:0005829">
    <property type="term" value="C:cytosol"/>
    <property type="evidence" value="ECO:0000304"/>
    <property type="project" value="Reactome"/>
</dbReference>
<dbReference type="GO" id="GO:0012505">
    <property type="term" value="C:endomembrane system"/>
    <property type="evidence" value="ECO:0007669"/>
    <property type="project" value="UniProtKB-SubCell"/>
</dbReference>
<dbReference type="GO" id="GO:0005874">
    <property type="term" value="C:microtubule"/>
    <property type="evidence" value="ECO:0007669"/>
    <property type="project" value="UniProtKB-KW"/>
</dbReference>
<dbReference type="GO" id="GO:0031090">
    <property type="term" value="C:organelle membrane"/>
    <property type="evidence" value="ECO:0000250"/>
    <property type="project" value="UniProtKB"/>
</dbReference>
<dbReference type="GO" id="GO:0008429">
    <property type="term" value="F:phosphatidylethanolamine binding"/>
    <property type="evidence" value="ECO:0000314"/>
    <property type="project" value="UniProt"/>
</dbReference>
<dbReference type="GO" id="GO:0031625">
    <property type="term" value="F:ubiquitin protein ligase binding"/>
    <property type="evidence" value="ECO:0000353"/>
    <property type="project" value="UniProtKB"/>
</dbReference>
<dbReference type="GO" id="GO:0035973">
    <property type="term" value="P:aggrephagy"/>
    <property type="evidence" value="ECO:0000315"/>
    <property type="project" value="UniProtKB"/>
</dbReference>
<dbReference type="GO" id="GO:0000045">
    <property type="term" value="P:autophagosome assembly"/>
    <property type="evidence" value="ECO:0000318"/>
    <property type="project" value="GO_Central"/>
</dbReference>
<dbReference type="GO" id="GO:0097352">
    <property type="term" value="P:autophagosome maturation"/>
    <property type="evidence" value="ECO:0000314"/>
    <property type="project" value="UniProtKB"/>
</dbReference>
<dbReference type="GO" id="GO:0006995">
    <property type="term" value="P:cellular response to nitrogen starvation"/>
    <property type="evidence" value="ECO:0000318"/>
    <property type="project" value="GO_Central"/>
</dbReference>
<dbReference type="GO" id="GO:0009267">
    <property type="term" value="P:cellular response to starvation"/>
    <property type="evidence" value="ECO:0000314"/>
    <property type="project" value="UniProtKB"/>
</dbReference>
<dbReference type="GO" id="GO:0016236">
    <property type="term" value="P:macroautophagy"/>
    <property type="evidence" value="ECO:0000314"/>
    <property type="project" value="UniProtKB"/>
</dbReference>
<dbReference type="GO" id="GO:0000423">
    <property type="term" value="P:mitophagy"/>
    <property type="evidence" value="ECO:0000318"/>
    <property type="project" value="GO_Central"/>
</dbReference>
<dbReference type="GO" id="GO:0032527">
    <property type="term" value="P:protein exit from endoplasmic reticulum"/>
    <property type="evidence" value="ECO:0000315"/>
    <property type="project" value="CACAO"/>
</dbReference>
<dbReference type="CDD" id="cd17236">
    <property type="entry name" value="Ubl_ATG8_MAP1LC3C"/>
    <property type="match status" value="1"/>
</dbReference>
<dbReference type="FunFam" id="3.10.20.90:FF:000149">
    <property type="entry name" value="microtubule-associated proteins 1A/1B light chain 3C"/>
    <property type="match status" value="1"/>
</dbReference>
<dbReference type="Gene3D" id="3.10.20.90">
    <property type="entry name" value="Phosphatidylinositol 3-kinase Catalytic Subunit, Chain A, domain 1"/>
    <property type="match status" value="1"/>
</dbReference>
<dbReference type="InterPro" id="IPR004241">
    <property type="entry name" value="Atg8-like"/>
</dbReference>
<dbReference type="InterPro" id="IPR027731">
    <property type="entry name" value="MAP1A/MAP1B_LC3C"/>
</dbReference>
<dbReference type="InterPro" id="IPR029071">
    <property type="entry name" value="Ubiquitin-like_domsf"/>
</dbReference>
<dbReference type="PANTHER" id="PTHR10969">
    <property type="entry name" value="MICROTUBULE-ASSOCIATED PROTEINS 1A/1B LIGHT CHAIN 3-RELATED"/>
    <property type="match status" value="1"/>
</dbReference>
<dbReference type="Pfam" id="PF02991">
    <property type="entry name" value="ATG8"/>
    <property type="match status" value="1"/>
</dbReference>
<dbReference type="SUPFAM" id="SSF54236">
    <property type="entry name" value="Ubiquitin-like"/>
    <property type="match status" value="1"/>
</dbReference>
<sequence length="147" mass="16852">MPPPQKIPSVRPFKQRKSLAIRQEEVAGIRAKFPNKIPVVVERYPRETFLPPLDKTKFLVPQELTMTQFLSIIRSRMVLRATEAFYLLVNNKSLVSMSATMAEIYRDYKDEDGFVYMTYASQETFGCLESAAPRDGSSLEDRPCNPL</sequence>
<keyword id="KW-0002">3D-structure</keyword>
<keyword id="KW-0072">Autophagy</keyword>
<keyword id="KW-0963">Cytoplasm</keyword>
<keyword id="KW-0968">Cytoplasmic vesicle</keyword>
<keyword id="KW-0206">Cytoskeleton</keyword>
<keyword id="KW-0449">Lipoprotein</keyword>
<keyword id="KW-0472">Membrane</keyword>
<keyword id="KW-0493">Microtubule</keyword>
<keyword id="KW-0597">Phosphoprotein</keyword>
<keyword id="KW-1267">Proteomics identification</keyword>
<keyword id="KW-1185">Reference proteome</keyword>
<keyword id="KW-0833">Ubl conjugation pathway</keyword>
<evidence type="ECO:0000250" key="1">
    <source>
        <dbReference type="UniProtKB" id="Q62625"/>
    </source>
</evidence>
<evidence type="ECO:0000269" key="2">
    <source>
    </source>
</evidence>
<evidence type="ECO:0000269" key="3">
    <source>
    </source>
</evidence>
<evidence type="ECO:0000269" key="4">
    <source>
    </source>
</evidence>
<evidence type="ECO:0000269" key="5">
    <source>
    </source>
</evidence>
<evidence type="ECO:0000269" key="6">
    <source>
    </source>
</evidence>
<evidence type="ECO:0000269" key="7">
    <source>
    </source>
</evidence>
<evidence type="ECO:0000269" key="8">
    <source>
    </source>
</evidence>
<evidence type="ECO:0000269" key="9">
    <source>
    </source>
</evidence>
<evidence type="ECO:0000269" key="10">
    <source>
    </source>
</evidence>
<evidence type="ECO:0000269" key="11">
    <source>
    </source>
</evidence>
<evidence type="ECO:0000269" key="12">
    <source>
    </source>
</evidence>
<evidence type="ECO:0000269" key="13">
    <source>
    </source>
</evidence>
<evidence type="ECO:0000269" key="14">
    <source>
    </source>
</evidence>
<evidence type="ECO:0000269" key="15">
    <source>
    </source>
</evidence>
<evidence type="ECO:0000269" key="16">
    <source>
    </source>
</evidence>
<evidence type="ECO:0000269" key="17">
    <source>
    </source>
</evidence>
<evidence type="ECO:0000269" key="18">
    <source>
    </source>
</evidence>
<evidence type="ECO:0000269" key="19">
    <source>
    </source>
</evidence>
<evidence type="ECO:0000269" key="20">
    <source>
    </source>
</evidence>
<evidence type="ECO:0000269" key="21">
    <source>
    </source>
</evidence>
<evidence type="ECO:0000269" key="22">
    <source>
    </source>
</evidence>
<evidence type="ECO:0000269" key="23">
    <source>
    </source>
</evidence>
<evidence type="ECO:0000269" key="24">
    <source>
    </source>
</evidence>
<evidence type="ECO:0000305" key="25"/>
<evidence type="ECO:0000305" key="26">
    <source>
    </source>
</evidence>
<evidence type="ECO:0007829" key="27">
    <source>
        <dbReference type="PDB" id="3WAM"/>
    </source>
</evidence>
<evidence type="ECO:0007829" key="28">
    <source>
        <dbReference type="PDB" id="3WAP"/>
    </source>
</evidence>
<organism>
    <name type="scientific">Homo sapiens</name>
    <name type="common">Human</name>
    <dbReference type="NCBI Taxonomy" id="9606"/>
    <lineage>
        <taxon>Eukaryota</taxon>
        <taxon>Metazoa</taxon>
        <taxon>Chordata</taxon>
        <taxon>Craniata</taxon>
        <taxon>Vertebrata</taxon>
        <taxon>Euteleostomi</taxon>
        <taxon>Mammalia</taxon>
        <taxon>Eutheria</taxon>
        <taxon>Euarchontoglires</taxon>
        <taxon>Primates</taxon>
        <taxon>Haplorrhini</taxon>
        <taxon>Catarrhini</taxon>
        <taxon>Hominidae</taxon>
        <taxon>Homo</taxon>
    </lineage>
</organism>
<gene>
    <name type="primary">MAP1LC3C</name>
</gene>
<comment type="function">
    <text evidence="9 16">Ubiquitin-like modifier that plays a crucial role in antibacterial autophagy (xenophagy) through the selective binding of CALCOCO2 (PubMed:23022382). Recruits all ATG8 family members to infecting bacteria such as S.typhimurium (PubMed:23022382). May also play a role in aggrephagy, the macroautophagic degradation of ubiquitinated and aggregated proteins (PubMed:28404643).</text>
</comment>
<comment type="subunit">
    <text evidence="1 4 5 7 8 9 11 12 13 14 15 16 17 21 23 24">3 different light chains, LC1 (a cleavage product of MAP1B), LC2 (a cleavage product of MAP1A) and LC3 (produced by one of the MAP1LC3 genes), can associate with the MAP1A or MAP1B heavy chains (By similarity). Interacts with TP53INP1 and TP53INP2 (PubMed:22470510). Interacts with CALCOCO2 (PubMed:23022382). Interacts with TECPR2 (PubMed:20562859). Interacts with TBC1D5 (PubMed:22354992). Found in a complex with UBQLN1 and UBQLN2 (PubMed:20529957). Interacts with UBQLN4 (via STI1 1 and 2 domains) (PubMed:23459205). Interacts with UBQLN1 in the presence of UBQLN4 (PubMed:23459205). Interacts with TRIM5 (PubMed:25127057). Interacts with ATG13 (PubMed:24290141). Interacts with MEFV and TRIM21 (PubMed:26347139). Interacts with WDR81; recruits MAP1LC3C to ubiquitinated protein aggregates in the aggrephagy process (PubMed:28404643). Interacts with MOAP1 (via LIR motif) (PubMed:33783314). Interacts with reticulophagy regulators RETREG1, RETREG2 and RETREG3 (PubMed:34338405). Interacts with TAX1BP1 (PubMed:26451915). Interacts with IRGM (PubMed:29420192). Interacts with SPART (PubMed:37443287).</text>
</comment>
<comment type="interaction">
    <interactant intactId="EBI-2603996">
        <id>Q9BXW4</id>
    </interactant>
    <interactant intactId="EBI-698810">
        <id>P62736</id>
        <label>ACTA2</label>
    </interactant>
    <organismsDiffer>false</organismsDiffer>
    <experiments>2</experiments>
</comment>
<comment type="interaction">
    <interactant intactId="EBI-2603996">
        <id>Q9BXW4</id>
    </interactant>
    <interactant intactId="EBI-2946739">
        <id>Q9BSB4</id>
        <label>ATG101</label>
    </interactant>
    <organismsDiffer>false</organismsDiffer>
    <experiments>4</experiments>
</comment>
<comment type="interaction">
    <interactant intactId="EBI-2603996">
        <id>Q9BXW4</id>
    </interactant>
    <interactant intactId="EBI-2798775">
        <id>O75143</id>
        <label>ATG13</label>
    </interactant>
    <organismsDiffer>false</organismsDiffer>
    <experiments>8</experiments>
</comment>
<comment type="interaction">
    <interactant intactId="EBI-2603996">
        <id>Q9BXW4</id>
    </interactant>
    <interactant intactId="EBI-535909">
        <id>Q676U5</id>
        <label>ATG16L1</label>
    </interactant>
    <organismsDiffer>false</organismsDiffer>
    <experiments>4</experiments>
</comment>
<comment type="interaction">
    <interactant intactId="EBI-2603996">
        <id>Q9BXW4</id>
    </interactant>
    <interactant intactId="EBI-712014">
        <id>Q9Y4P1</id>
        <label>ATG4B</label>
    </interactant>
    <organismsDiffer>false</organismsDiffer>
    <experiments>4</experiments>
</comment>
<comment type="interaction">
    <interactant intactId="EBI-2603996">
        <id>Q9BXW4</id>
    </interactant>
    <interactant intactId="EBI-739580">
        <id>Q13137</id>
        <label>CALCOCO2</label>
    </interactant>
    <organismsDiffer>false</organismsDiffer>
    <experiments>3</experiments>
</comment>
<comment type="interaction">
    <interactant intactId="EBI-2603996">
        <id>Q9BXW4</id>
    </interactant>
    <interactant intactId="EBI-11532021">
        <id>P20807-4</id>
        <label>CAPN3</label>
    </interactant>
    <organismsDiffer>false</organismsDiffer>
    <experiments>3</experiments>
</comment>
<comment type="interaction">
    <interactant intactId="EBI-2603996">
        <id>Q9BXW4</id>
    </interactant>
    <interactant intactId="EBI-2946907">
        <id>Q8WXU2</id>
        <label>DNAAF4</label>
    </interactant>
    <organismsDiffer>false</organismsDiffer>
    <experiments>2</experiments>
</comment>
<comment type="interaction">
    <interactant intactId="EBI-2603996">
        <id>Q9BXW4</id>
    </interactant>
    <interactant intactId="EBI-2869338">
        <id>Q9BQS8</id>
        <label>FYCO1</label>
    </interactant>
    <organismsDiffer>false</organismsDiffer>
    <experiments>2</experiments>
</comment>
<comment type="interaction">
    <interactant intactId="EBI-2603996">
        <id>Q9BXW4</id>
    </interactant>
    <interactant intactId="EBI-948296">
        <id>Q9UKD1</id>
        <label>GMEB2</label>
    </interactant>
    <organismsDiffer>false</organismsDiffer>
    <experiments>3</experiments>
</comment>
<comment type="interaction">
    <interactant intactId="EBI-2603996">
        <id>Q9BXW4</id>
    </interactant>
    <interactant intactId="EBI-356424">
        <id>O00410</id>
        <label>IPO5</label>
    </interactant>
    <organismsDiffer>false</organismsDiffer>
    <experiments>2</experiments>
</comment>
<comment type="interaction">
    <interactant intactId="EBI-2603996">
        <id>Q9BXW4</id>
    </interactant>
    <interactant intactId="EBI-2514778">
        <id>Q86V97</id>
        <label>KBTBD6</label>
    </interactant>
    <organismsDiffer>false</organismsDiffer>
    <experiments>4</experiments>
</comment>
<comment type="interaction">
    <interactant intactId="EBI-2603996">
        <id>Q9BXW4</id>
    </interactant>
    <interactant intactId="EBI-473695">
        <id>Q8WVZ9</id>
        <label>KBTBD7</label>
    </interactant>
    <organismsDiffer>false</organismsDiffer>
    <experiments>4</experiments>
</comment>
<comment type="interaction">
    <interactant intactId="EBI-2603996">
        <id>Q9BXW4</id>
    </interactant>
    <interactant intactId="EBI-8070286">
        <id>O43561-2</id>
        <label>LAT</label>
    </interactant>
    <organismsDiffer>false</organismsDiffer>
    <experiments>3</experiments>
</comment>
<comment type="interaction">
    <interactant intactId="EBI-2603996">
        <id>Q9BXW4</id>
    </interactant>
    <interactant intactId="EBI-2555085">
        <id>Q8IVT2</id>
        <label>MISP</label>
    </interactant>
    <organismsDiffer>false</organismsDiffer>
    <experiments>3</experiments>
</comment>
<comment type="interaction">
    <interactant intactId="EBI-2603996">
        <id>Q9BXW4</id>
    </interactant>
    <interactant intactId="EBI-742698">
        <id>Q14596</id>
        <label>NBR1</label>
    </interactant>
    <organismsDiffer>false</organismsDiffer>
    <experiments>3</experiments>
</comment>
<comment type="interaction">
    <interactant intactId="EBI-2603996">
        <id>Q9BXW4</id>
    </interactant>
    <interactant intactId="EBI-80799">
        <id>Q8NI08</id>
        <label>NCOA7</label>
    </interactant>
    <organismsDiffer>false</organismsDiffer>
    <experiments>2</experiments>
</comment>
<comment type="interaction">
    <interactant intactId="EBI-2603996">
        <id>Q9BXW4</id>
    </interactant>
    <interactant intactId="EBI-1044009">
        <id>Q8TD19</id>
        <label>NEK9</label>
    </interactant>
    <organismsDiffer>false</organismsDiffer>
    <experiments>2</experiments>
</comment>
<comment type="interaction">
    <interactant intactId="EBI-2603996">
        <id>Q9BXW4</id>
    </interactant>
    <interactant intactId="EBI-307133">
        <id>O75323</id>
        <label>NIPSNAP2</label>
    </interactant>
    <organismsDiffer>false</organismsDiffer>
    <experiments>2</experiments>
</comment>
<comment type="interaction">
    <interactant intactId="EBI-2603996">
        <id>Q9BXW4</id>
    </interactant>
    <interactant intactId="EBI-12807478">
        <id>P35372-10</id>
        <label>OPRM1</label>
    </interactant>
    <organismsDiffer>false</organismsDiffer>
    <experiments>3</experiments>
</comment>
<comment type="interaction">
    <interactant intactId="EBI-2603996">
        <id>Q9BXW4</id>
    </interactant>
    <interactant intactId="EBI-367363">
        <id>Q9NS23</id>
        <label>RASSF1</label>
    </interactant>
    <organismsDiffer>false</organismsDiffer>
    <experiments>2</experiments>
</comment>
<comment type="interaction">
    <interactant intactId="EBI-2603996">
        <id>Q9BXW4</id>
    </interactant>
    <interactant intactId="EBI-367390">
        <id>Q8WWW0</id>
        <label>RASSF5</label>
    </interactant>
    <organismsDiffer>false</organismsDiffer>
    <experiments>2</experiments>
</comment>
<comment type="interaction">
    <interactant intactId="EBI-2603996">
        <id>Q9BXW4</id>
    </interactant>
    <interactant intactId="EBI-3923409">
        <id>Q8NHV9</id>
        <label>RHOXF1</label>
    </interactant>
    <organismsDiffer>false</organismsDiffer>
    <experiments>3</experiments>
</comment>
<comment type="interaction">
    <interactant intactId="EBI-2603996">
        <id>Q9BXW4</id>
    </interactant>
    <interactant intactId="EBI-10181525">
        <id>Q6ZNE9</id>
        <label>RUFY4</label>
    </interactant>
    <organismsDiffer>false</organismsDiffer>
    <experiments>3</experiments>
</comment>
<comment type="interaction">
    <interactant intactId="EBI-2603996">
        <id>Q9BXW4</id>
    </interactant>
    <interactant intactId="EBI-1054743">
        <id>Q15459</id>
        <label>SF3A1</label>
    </interactant>
    <organismsDiffer>false</organismsDiffer>
    <experiments>3</experiments>
</comment>
<comment type="interaction">
    <interactant intactId="EBI-2603996">
        <id>Q9BXW4</id>
    </interactant>
    <interactant intactId="EBI-307104">
        <id>Q13501</id>
        <label>SQSTM1</label>
    </interactant>
    <organismsDiffer>false</organismsDiffer>
    <experiments>8</experiments>
</comment>
<comment type="interaction">
    <interactant intactId="EBI-2603996">
        <id>Q9BXW4</id>
    </interactant>
    <interactant intactId="EBI-992580">
        <id>Q13188</id>
        <label>STK3</label>
    </interactant>
    <organismsDiffer>false</organismsDiffer>
    <experiments>2</experiments>
</comment>
<comment type="interaction">
    <interactant intactId="EBI-2603996">
        <id>Q9BXW4</id>
    </interactant>
    <interactant intactId="EBI-529518">
        <id>Q86VP1</id>
        <label>TAX1BP1</label>
    </interactant>
    <organismsDiffer>false</organismsDiffer>
    <experiments>3</experiments>
</comment>
<comment type="interaction">
    <interactant intactId="EBI-2603996">
        <id>Q9BXW4</id>
    </interactant>
    <interactant intactId="EBI-11899977">
        <id>Q3MII6</id>
        <label>TBC1D25</label>
    </interactant>
    <organismsDiffer>false</organismsDiffer>
    <experiments>3</experiments>
</comment>
<comment type="interaction">
    <interactant intactId="EBI-2603996">
        <id>Q9BXW4</id>
    </interactant>
    <interactant intactId="EBI-2947180">
        <id>Q9UPU7</id>
        <label>TBC1D2B</label>
    </interactant>
    <organismsDiffer>false</organismsDiffer>
    <experiments>2</experiments>
</comment>
<comment type="interaction">
    <interactant intactId="EBI-2603996">
        <id>Q9BXW4</id>
    </interactant>
    <interactant intactId="EBI-2946991">
        <id>O15040</id>
        <label>TECPR2</label>
    </interactant>
    <organismsDiffer>false</organismsDiffer>
    <experiments>2</experiments>
</comment>
<comment type="interaction">
    <interactant intactId="EBI-2603996">
        <id>Q9BXW4</id>
    </interactant>
    <interactant intactId="EBI-357849">
        <id>Q15025</id>
        <label>TNIP1</label>
    </interactant>
    <organismsDiffer>false</organismsDiffer>
    <experiments>3</experiments>
</comment>
<comment type="interaction">
    <interactant intactId="EBI-2603996">
        <id>Q9BXW4</id>
    </interactant>
    <interactant intactId="EBI-9986117">
        <id>Q96A56</id>
        <label>TP53INP1</label>
    </interactant>
    <organismsDiffer>false</organismsDiffer>
    <experiments>3</experiments>
</comment>
<comment type="interaction">
    <interactant intactId="EBI-2603996">
        <id>Q9BXW4</id>
    </interactant>
    <interactant intactId="EBI-746981">
        <id>Q969E8</id>
        <label>TSR2</label>
    </interactant>
    <organismsDiffer>false</organismsDiffer>
    <experiments>3</experiments>
</comment>
<comment type="interaction">
    <interactant intactId="EBI-2603996">
        <id>Q9BXW4</id>
    </interactant>
    <interactant intactId="EBI-747805">
        <id>Q9GZZ9</id>
        <label>UBA5</label>
    </interactant>
    <organismsDiffer>false</organismsDiffer>
    <experiments>2</experiments>
</comment>
<comment type="interaction">
    <interactant intactId="EBI-2603996">
        <id>Q9BXW4</id>
    </interactant>
    <interactant intactId="EBI-908831">
        <id>O75385</id>
        <label>ULK1</label>
    </interactant>
    <organismsDiffer>false</organismsDiffer>
    <experiments>4</experiments>
</comment>
<comment type="interaction">
    <interactant intactId="EBI-2603996">
        <id>Q9BXW4</id>
    </interactant>
    <interactant intactId="EBI-1569256">
        <id>Q8IZQ1</id>
        <label>WDFY3</label>
    </interactant>
    <organismsDiffer>false</organismsDiffer>
    <experiments>7</experiments>
</comment>
<comment type="interaction">
    <interactant intactId="EBI-2603996">
        <id>Q9BXW4</id>
    </interactant>
    <interactant intactId="EBI-707773">
        <id>P17028</id>
        <label>ZNF24</label>
    </interactant>
    <organismsDiffer>false</organismsDiffer>
    <experiments>3</experiments>
</comment>
<comment type="subcellular location">
    <subcellularLocation>
        <location evidence="2 4 11 19">Cytoplasmic vesicle</location>
        <location evidence="2 4 11 19">Autophagosome membrane</location>
        <topology evidence="2">Lipid-anchor</topology>
    </subcellularLocation>
    <subcellularLocation>
        <location evidence="2">Endomembrane system</location>
        <topology evidence="2">Lipid-anchor</topology>
    </subcellularLocation>
    <subcellularLocation>
        <location evidence="2">Cytoplasm</location>
        <location evidence="2">Cytoskeleton</location>
    </subcellularLocation>
    <text evidence="2">LC3-II binds to the autophagic membranes.</text>
</comment>
<comment type="tissue specificity">
    <text evidence="2">Most abundant in placenta, lung and ovary.</text>
</comment>
<comment type="PTM">
    <text evidence="3 6 18 19 22">The precursor molecule is cleaved by ATG4 (ATG4A, ATG4B, ATG4C or ATG4D) to expose the glycine at the C-terminus and form the cytosolic form, LC3-I (PubMed:15187094, PubMed:20818167, PubMed:30661429, PubMed:31709703). The processed form is then activated by APG7L/ATG7, transferred to ATG3 and conjugated to phosphatidylethanolamine (PE) phospholipid to form the membrane-bound form, LC3-II (PubMed:15187094). During non-canonical autophagy, the processed form is conjugated to phosphatidylserine (PS) phospholipid (PubMed:33909989). ATG4 proteins also mediate the delipidation of PE-conjugated forms (PubMed:31709703, PubMed:33909989). In addition, ATG4B and ATG4D mediate delipidation of ATG8 proteins conjugated to PS during non-canonical autophagy (PubMed:33909989).</text>
</comment>
<comment type="PTM">
    <text evidence="10 20 22">(Microbial infection) The Legionella effector RavZ is a deconjugating enzyme that hydrolyzes the amide bond between the C-terminal glycine residue and an adjacent aromatic residue in ATG8 proteins conjugated to phosphatidylethanolamine (PE), producing an ATG8 protein that is resistant to reconjugation by the host machinery due to the cleavage of the reactive C-terminal glycine (PubMed:23112293, PubMed:31722778). RavZ is also able to mediate delipidation of ATG8 proteins conjugated to phosphatidylserine (PS) (PubMed:33909989).</text>
</comment>
<comment type="PTM">
    <text evidence="19">Phosphorylation at Ser-96 and Ser-98 by TBK1 prevents interaction with ATG4 (ATG4A, ATG4B, ATG4C or ATG4D) (PubMed:31709703). Phosphorylation by TBK1 on autophagosomes prevents their delipidation by ATG4 and premature removal from nascent autophagosomes (PubMed:31709703).</text>
</comment>
<comment type="similarity">
    <text evidence="25">Belongs to the ATG8 family.</text>
</comment>
<feature type="chain" id="PRO_0000017204" description="Microtubule-associated protein 1 light chain 3 gamma">
    <location>
        <begin position="1"/>
        <end position="126"/>
    </location>
</feature>
<feature type="propeptide" id="PRO_0000017205" description="Removed in mature form">
    <location>
        <begin position="127"/>
        <end position="147"/>
    </location>
</feature>
<feature type="site" description="Cleavage; by ATG4B" evidence="26">
    <location>
        <begin position="126"/>
        <end position="127"/>
    </location>
</feature>
<feature type="modified residue" description="Phosphoserine; by TBK1" evidence="19">
    <location>
        <position position="93"/>
    </location>
</feature>
<feature type="modified residue" description="Phosphoserine; by TBK1" evidence="19">
    <location>
        <position position="96"/>
    </location>
</feature>
<feature type="lipid moiety-binding region" description="Phosphatidylethanolamine amidated glycine; alternate" evidence="22 26">
    <location>
        <position position="126"/>
    </location>
</feature>
<feature type="lipid moiety-binding region" description="Phosphatidylserine amidated glycine; alternate" evidence="22">
    <location>
        <position position="126"/>
    </location>
</feature>
<feature type="mutagenesis site" description="Impaired phosphorylation by TBK1." evidence="19">
    <original>SLVS</original>
    <variation>ALVA</variation>
    <location>
        <begin position="93"/>
        <end position="96"/>
    </location>
</feature>
<feature type="mutagenesis site" description="Phospho-mimetic mutant; impaired interaction with ATG4 proteins, preventing cleavage at the C-terminus, conjugation to phosphatidylethanolamine and localization to autophagosomes." evidence="19">
    <original>SLVS</original>
    <variation>DLVD</variation>
    <location>
        <begin position="93"/>
        <end position="96"/>
    </location>
</feature>
<feature type="mutagenesis site" description="No processing of precursor." evidence="2">
    <original>G</original>
    <variation>A</variation>
    <location>
        <position position="126"/>
    </location>
</feature>
<feature type="helix" evidence="27">
    <location>
        <begin position="13"/>
        <end position="16"/>
    </location>
</feature>
<feature type="helix" evidence="27">
    <location>
        <begin position="19"/>
        <end position="32"/>
    </location>
</feature>
<feature type="strand" evidence="27">
    <location>
        <begin position="36"/>
        <end position="43"/>
    </location>
</feature>
<feature type="strand" evidence="27">
    <location>
        <begin position="48"/>
        <end position="50"/>
    </location>
</feature>
<feature type="strand" evidence="27">
    <location>
        <begin position="56"/>
        <end position="61"/>
    </location>
</feature>
<feature type="helix" evidence="27">
    <location>
        <begin position="66"/>
        <end position="76"/>
    </location>
</feature>
<feature type="strand" evidence="27">
    <location>
        <begin position="77"/>
        <end position="79"/>
    </location>
</feature>
<feature type="strand" evidence="28">
    <location>
        <begin position="81"/>
        <end position="83"/>
    </location>
</feature>
<feature type="strand" evidence="27">
    <location>
        <begin position="86"/>
        <end position="89"/>
    </location>
</feature>
<feature type="turn" evidence="27">
    <location>
        <begin position="90"/>
        <end position="92"/>
    </location>
</feature>
<feature type="helix" evidence="27">
    <location>
        <begin position="101"/>
        <end position="108"/>
    </location>
</feature>
<feature type="strand" evidence="28">
    <location>
        <begin position="111"/>
        <end position="113"/>
    </location>
</feature>
<feature type="strand" evidence="27">
    <location>
        <begin position="115"/>
        <end position="121"/>
    </location>
</feature>
<proteinExistence type="evidence at protein level"/>
<reference key="1">
    <citation type="journal article" date="2003" name="J. Biol. Chem.">
        <title>Post-translational modifications of three members of the human MAP1LC3 family and detection of a novel type of modification for MAP1LC3B.</title>
        <authorList>
            <person name="He H."/>
            <person name="Dang Y."/>
            <person name="Dai F."/>
            <person name="Guo Z."/>
            <person name="Wu J."/>
            <person name="She X."/>
            <person name="Pei Y."/>
            <person name="Chen Y."/>
            <person name="Ling W."/>
            <person name="Wu C."/>
            <person name="Zhao S."/>
            <person name="Liu J.O."/>
            <person name="Yu L."/>
        </authorList>
    </citation>
    <scope>NUCLEOTIDE SEQUENCE [MRNA]</scope>
    <scope>SUBCELLULAR LOCATION</scope>
    <scope>TISSUE SPECIFICITY</scope>
    <scope>MUTAGENESIS OF GLY-126</scope>
</reference>
<reference key="2">
    <citation type="journal article" date="2006" name="Nature">
        <title>The DNA sequence and biological annotation of human chromosome 1.</title>
        <authorList>
            <person name="Gregory S.G."/>
            <person name="Barlow K.F."/>
            <person name="McLay K.E."/>
            <person name="Kaul R."/>
            <person name="Swarbreck D."/>
            <person name="Dunham A."/>
            <person name="Scott C.E."/>
            <person name="Howe K.L."/>
            <person name="Woodfine K."/>
            <person name="Spencer C.C.A."/>
            <person name="Jones M.C."/>
            <person name="Gillson C."/>
            <person name="Searle S."/>
            <person name="Zhou Y."/>
            <person name="Kokocinski F."/>
            <person name="McDonald L."/>
            <person name="Evans R."/>
            <person name="Phillips K."/>
            <person name="Atkinson A."/>
            <person name="Cooper R."/>
            <person name="Jones C."/>
            <person name="Hall R.E."/>
            <person name="Andrews T.D."/>
            <person name="Lloyd C."/>
            <person name="Ainscough R."/>
            <person name="Almeida J.P."/>
            <person name="Ambrose K.D."/>
            <person name="Anderson F."/>
            <person name="Andrew R.W."/>
            <person name="Ashwell R.I.S."/>
            <person name="Aubin K."/>
            <person name="Babbage A.K."/>
            <person name="Bagguley C.L."/>
            <person name="Bailey J."/>
            <person name="Beasley H."/>
            <person name="Bethel G."/>
            <person name="Bird C.P."/>
            <person name="Bray-Allen S."/>
            <person name="Brown J.Y."/>
            <person name="Brown A.J."/>
            <person name="Buckley D."/>
            <person name="Burton J."/>
            <person name="Bye J."/>
            <person name="Carder C."/>
            <person name="Chapman J.C."/>
            <person name="Clark S.Y."/>
            <person name="Clarke G."/>
            <person name="Clee C."/>
            <person name="Cobley V."/>
            <person name="Collier R.E."/>
            <person name="Corby N."/>
            <person name="Coville G.J."/>
            <person name="Davies J."/>
            <person name="Deadman R."/>
            <person name="Dunn M."/>
            <person name="Earthrowl M."/>
            <person name="Ellington A.G."/>
            <person name="Errington H."/>
            <person name="Frankish A."/>
            <person name="Frankland J."/>
            <person name="French L."/>
            <person name="Garner P."/>
            <person name="Garnett J."/>
            <person name="Gay L."/>
            <person name="Ghori M.R.J."/>
            <person name="Gibson R."/>
            <person name="Gilby L.M."/>
            <person name="Gillett W."/>
            <person name="Glithero R.J."/>
            <person name="Grafham D.V."/>
            <person name="Griffiths C."/>
            <person name="Griffiths-Jones S."/>
            <person name="Grocock R."/>
            <person name="Hammond S."/>
            <person name="Harrison E.S.I."/>
            <person name="Hart E."/>
            <person name="Haugen E."/>
            <person name="Heath P.D."/>
            <person name="Holmes S."/>
            <person name="Holt K."/>
            <person name="Howden P.J."/>
            <person name="Hunt A.R."/>
            <person name="Hunt S.E."/>
            <person name="Hunter G."/>
            <person name="Isherwood J."/>
            <person name="James R."/>
            <person name="Johnson C."/>
            <person name="Johnson D."/>
            <person name="Joy A."/>
            <person name="Kay M."/>
            <person name="Kershaw J.K."/>
            <person name="Kibukawa M."/>
            <person name="Kimberley A.M."/>
            <person name="King A."/>
            <person name="Knights A.J."/>
            <person name="Lad H."/>
            <person name="Laird G."/>
            <person name="Lawlor S."/>
            <person name="Leongamornlert D.A."/>
            <person name="Lloyd D.M."/>
            <person name="Loveland J."/>
            <person name="Lovell J."/>
            <person name="Lush M.J."/>
            <person name="Lyne R."/>
            <person name="Martin S."/>
            <person name="Mashreghi-Mohammadi M."/>
            <person name="Matthews L."/>
            <person name="Matthews N.S.W."/>
            <person name="McLaren S."/>
            <person name="Milne S."/>
            <person name="Mistry S."/>
            <person name="Moore M.J.F."/>
            <person name="Nickerson T."/>
            <person name="O'Dell C.N."/>
            <person name="Oliver K."/>
            <person name="Palmeiri A."/>
            <person name="Palmer S.A."/>
            <person name="Parker A."/>
            <person name="Patel D."/>
            <person name="Pearce A.V."/>
            <person name="Peck A.I."/>
            <person name="Pelan S."/>
            <person name="Phelps K."/>
            <person name="Phillimore B.J."/>
            <person name="Plumb R."/>
            <person name="Rajan J."/>
            <person name="Raymond C."/>
            <person name="Rouse G."/>
            <person name="Saenphimmachak C."/>
            <person name="Sehra H.K."/>
            <person name="Sheridan E."/>
            <person name="Shownkeen R."/>
            <person name="Sims S."/>
            <person name="Skuce C.D."/>
            <person name="Smith M."/>
            <person name="Steward C."/>
            <person name="Subramanian S."/>
            <person name="Sycamore N."/>
            <person name="Tracey A."/>
            <person name="Tromans A."/>
            <person name="Van Helmond Z."/>
            <person name="Wall M."/>
            <person name="Wallis J.M."/>
            <person name="White S."/>
            <person name="Whitehead S.L."/>
            <person name="Wilkinson J.E."/>
            <person name="Willey D.L."/>
            <person name="Williams H."/>
            <person name="Wilming L."/>
            <person name="Wray P.W."/>
            <person name="Wu Z."/>
            <person name="Coulson A."/>
            <person name="Vaudin M."/>
            <person name="Sulston J.E."/>
            <person name="Durbin R.M."/>
            <person name="Hubbard T."/>
            <person name="Wooster R."/>
            <person name="Dunham I."/>
            <person name="Carter N.P."/>
            <person name="McVean G."/>
            <person name="Ross M.T."/>
            <person name="Harrow J."/>
            <person name="Olson M.V."/>
            <person name="Beck S."/>
            <person name="Rogers J."/>
            <person name="Bentley D.R."/>
        </authorList>
    </citation>
    <scope>NUCLEOTIDE SEQUENCE [LARGE SCALE GENOMIC DNA]</scope>
</reference>
<reference key="3">
    <citation type="journal article" date="2004" name="Genome Res.">
        <title>The status, quality, and expansion of the NIH full-length cDNA project: the Mammalian Gene Collection (MGC).</title>
        <authorList>
            <consortium name="The MGC Project Team"/>
        </authorList>
    </citation>
    <scope>NUCLEOTIDE SEQUENCE [LARGE SCALE MRNA]</scope>
</reference>
<reference key="4">
    <citation type="journal article" date="2004" name="J. Biol. Chem.">
        <title>HsAtg4B/HsApg4B/autophagin-1 cleaves the carboxyl termini of three human Atg8 homologues and delipidates microtubule-associated protein light chain 3- and GABAA receptor-associated protein-phospholipid conjugates.</title>
        <authorList>
            <person name="Tanida I."/>
            <person name="Sou Y.-S."/>
            <person name="Ezaki J."/>
            <person name="Minematsu-Ikeguchi N."/>
            <person name="Ueno T."/>
            <person name="Kominami E."/>
        </authorList>
    </citation>
    <scope>LIPIDATION AT GLY-126</scope>
    <scope>CLEAVAGE BY APG4B</scope>
</reference>
<reference key="5">
    <citation type="journal article" date="2010" name="Autophagy">
        <title>Synthetic substrates for measuring activity of autophagy proteases: autophagins (Atg4).</title>
        <authorList>
            <person name="Shu C.W."/>
            <person name="Drag M."/>
            <person name="Bekes M."/>
            <person name="Zhai D."/>
            <person name="Salvesen G.S."/>
            <person name="Reed J.C."/>
        </authorList>
    </citation>
    <scope>CLEAVAGE BY ATG4B</scope>
</reference>
<reference key="6">
    <citation type="journal article" date="2010" name="Hum. Mol. Genet.">
        <title>Ubiquilin functions in autophagy and is degraded by chaperone-mediated autophagy.</title>
        <authorList>
            <person name="Rothenberg C."/>
            <person name="Srinivasan D."/>
            <person name="Mah L."/>
            <person name="Kaushik S."/>
            <person name="Peterhoff C.M."/>
            <person name="Ugolino J."/>
            <person name="Fang S."/>
            <person name="Cuervo A.M."/>
            <person name="Nixon R.A."/>
            <person name="Monteiro M.J."/>
        </authorList>
    </citation>
    <scope>IDENTIFICATION IN A COMPLEX WITH UBQLN1 AND UBQLN2</scope>
    <scope>SUBCELLULAR LOCATION</scope>
</reference>
<reference key="7">
    <citation type="journal article" date="2010" name="Nature">
        <title>Network organization of the human autophagy system.</title>
        <authorList>
            <person name="Behrends C."/>
            <person name="Sowa M.E."/>
            <person name="Gygi S.P."/>
            <person name="Harper J.W."/>
        </authorList>
    </citation>
    <scope>INTERACTION WITH TECPR2</scope>
</reference>
<reference key="8">
    <citation type="journal article" date="2012" name="Mol. Cell. Biol.">
        <title>Rab GTPase-activating proteins in autophagy: regulation of endocytic and autophagy pathways by direct binding to human ATG8 modifiers.</title>
        <authorList>
            <person name="Popovic D."/>
            <person name="Akutsu M."/>
            <person name="Novak I."/>
            <person name="Harper J.W."/>
            <person name="Behrends C."/>
            <person name="Dikic I."/>
        </authorList>
    </citation>
    <scope>INTERACTION WITH TBC1D5</scope>
</reference>
<reference key="9">
    <citation type="journal article" date="2012" name="PLoS ONE">
        <title>DOR/Tp53inp2 and Tp53inp1 constitute a metazoan gene family encoding dual regulators of autophagy and transcription.</title>
        <authorList>
            <person name="Sancho A."/>
            <person name="Duran J."/>
            <person name="Garcia-Espana A."/>
            <person name="Mauvezin C."/>
            <person name="Alemu E.A."/>
            <person name="Lamark T."/>
            <person name="Macias M.J."/>
            <person name="Desalle R."/>
            <person name="Royo M."/>
            <person name="Sala D."/>
            <person name="Chicote J.U."/>
            <person name="Palacin M."/>
            <person name="Johansen T."/>
            <person name="Zorzano A."/>
        </authorList>
    </citation>
    <scope>INTERACTION WITH TP53INP1 AND TP53INP2</scope>
</reference>
<reference key="10">
    <citation type="journal article" date="2012" name="Science">
        <title>The Legionella effector RavZ inhibits host autophagy through irreversible Atg8 deconjugation.</title>
        <authorList>
            <person name="Choy A."/>
            <person name="Dancourt J."/>
            <person name="Mugo B."/>
            <person name="O'Connor T.J."/>
            <person name="Isberg R.R."/>
            <person name="Melia T.J."/>
            <person name="Roy C.R."/>
        </authorList>
    </citation>
    <scope>DECONJUGATION BY LEGIONELLA RAVZ (MICROBIAL INFECTION)</scope>
</reference>
<reference key="11">
    <citation type="journal article" date="2013" name="EMBO Rep.">
        <title>Ubiquilin4 is an adaptor protein that recruits Ubiquilin1 to the autophagy machinery.</title>
        <authorList>
            <person name="Lee D.Y."/>
            <person name="Arnott D."/>
            <person name="Brown E.J."/>
        </authorList>
    </citation>
    <scope>INTERACTION WITH UBQLN1 AND UBQLN4</scope>
    <scope>SUBCELLULAR LOCATION</scope>
</reference>
<reference key="12">
    <citation type="journal article" date="2014" name="Dev. Cell">
        <title>TRIM proteins regulate autophagy and can target autophagic substrates by direct recognition.</title>
        <authorList>
            <person name="Mandell M.A."/>
            <person name="Jain A."/>
            <person name="Arko-Mensah J."/>
            <person name="Chauhan S."/>
            <person name="Kimura T."/>
            <person name="Dinkins C."/>
            <person name="Silvestri G."/>
            <person name="Munch J."/>
            <person name="Kirchhoff F."/>
            <person name="Simonsen A."/>
            <person name="Wei Y."/>
            <person name="Levine B."/>
            <person name="Johansen T."/>
            <person name="Deretic V."/>
        </authorList>
    </citation>
    <scope>INTERACTION WITH TRIM5</scope>
</reference>
<reference key="13">
    <citation type="journal article" date="2015" name="J. Cell Biol.">
        <title>TRIM-mediated precision autophagy targets cytoplasmic regulators of innate immunity.</title>
        <authorList>
            <person name="Kimura T."/>
            <person name="Jain A."/>
            <person name="Choi S.W."/>
            <person name="Mandell M.A."/>
            <person name="Schroder K."/>
            <person name="Johansen T."/>
            <person name="Deretic V."/>
        </authorList>
    </citation>
    <scope>INTERACTION WITH MEFV AND TRIM21</scope>
</reference>
<reference key="14">
    <citation type="journal article" date="2015" name="PLoS Pathog.">
        <title>The Autophagy Receptor TAX1BP1 and the Molecular Motor Myosin VI Are Required for Clearance of Salmonella Typhimurium by Autophagy.</title>
        <authorList>
            <person name="Tumbarello D.A."/>
            <person name="Manna P.T."/>
            <person name="Allen M."/>
            <person name="Bycroft M."/>
            <person name="Arden S.D."/>
            <person name="Kendrick-Jones J."/>
            <person name="Buss F."/>
        </authorList>
    </citation>
    <scope>INTERACTION WITH TAX1BP1</scope>
</reference>
<reference key="15">
    <citation type="journal article" date="2017" name="J. Cell Biol.">
        <title>The BEACH-containing protein WDR81 coordinates p62 and LC3C to promote aggrephagy.</title>
        <authorList>
            <person name="Liu X."/>
            <person name="Li Y."/>
            <person name="Wang X."/>
            <person name="Xing R."/>
            <person name="Liu K."/>
            <person name="Gan Q."/>
            <person name="Tang C."/>
            <person name="Gao Z."/>
            <person name="Jian Y."/>
            <person name="Luo S."/>
            <person name="Guo W."/>
            <person name="Yang C."/>
        </authorList>
    </citation>
    <scope>FUNCTION</scope>
    <scope>INTERACTION WITH WDR81</scope>
</reference>
<reference key="16">
    <citation type="journal article" date="2018" name="J. Cell Biol.">
        <title>Mechanism of Stx17 recruitment to autophagosomes via IRGM and mammalian Atg8 proteins.</title>
        <authorList>
            <person name="Kumar S."/>
            <person name="Jain A."/>
            <person name="Farzam F."/>
            <person name="Jia J."/>
            <person name="Gu Y."/>
            <person name="Choi S.W."/>
            <person name="Mudd M.H."/>
            <person name="Claude-Taupin A."/>
            <person name="Wester M.J."/>
            <person name="Lidke K.A."/>
            <person name="Rusten T.E."/>
            <person name="Deretic V."/>
        </authorList>
    </citation>
    <scope>INTERACTION WITH IRGM</scope>
</reference>
<reference key="17">
    <citation type="journal article" date="2019" name="Autophagy">
        <title>Redundancy of human ATG4 protease isoforms in autophagy and LC3/GABARAP processing revealed in cells.</title>
        <authorList>
            <person name="Agrotis A."/>
            <person name="Pengo N."/>
            <person name="Burden J.J."/>
            <person name="Ketteler R."/>
        </authorList>
    </citation>
    <scope>PROTEOLYTIC CLEAVAGE</scope>
</reference>
<reference key="18">
    <citation type="journal article" date="2019" name="BMB Rep.">
        <title>LIR motifs and the membrane-targeting domain are complementary in the function of RavZ.</title>
        <authorList>
            <person name="Park S.W."/>
            <person name="Jun Y.W."/>
            <person name="Jeon P."/>
            <person name="Lee Y.K."/>
            <person name="Park J.H."/>
            <person name="Lee S.H."/>
            <person name="Lee J.A."/>
            <person name="Jang D.J."/>
        </authorList>
    </citation>
    <scope>DECONJUGATION BY LEGIONELLA RAVZ (MICROBIAL INFECTION)</scope>
</reference>
<reference key="19">
    <citation type="journal article" date="2020" name="EMBO Rep.">
        <title>TBK1-mediated phosphorylation of LC3C and GABARAP-L2 controls autophagosome shedding by ATG4 protease.</title>
        <authorList>
            <person name="Herhaus L."/>
            <person name="Bhaskara R.M."/>
            <person name="Lystad A.H."/>
            <person name="Gestal-Mato U."/>
            <person name="Covarrubias-Pinto A."/>
            <person name="Bonn F."/>
            <person name="Simonsen A."/>
            <person name="Hummer G."/>
            <person name="Dikic I."/>
        </authorList>
    </citation>
    <scope>PHOSPHORYLATION AT SER-93 AND SER-96</scope>
    <scope>LIPIDATION AT GLY-126</scope>
    <scope>SUBCELLULAR LOCATION</scope>
    <scope>MUTAGENESIS OF 93-SER--SER-96</scope>
</reference>
<reference key="20">
    <citation type="journal article" date="2021" name="Autophagy">
        <title>The BAX-binding protein MOAP1 associates with LC3 and promotes closure of the phagophore.</title>
        <authorList>
            <person name="Chang H.C."/>
            <person name="Tao R.N."/>
            <person name="Tan C.T."/>
            <person name="Wu Y.J."/>
            <person name="Bay B.H."/>
            <person name="Yu V.C."/>
        </authorList>
    </citation>
    <scope>INTERACTION WITH MOAP1</scope>
</reference>
<reference key="21">
    <citation type="journal article" date="2021" name="EMBO Rep.">
        <title>Role of FAM134 paralogues in endoplasmic reticulum remodeling, ER-phagy, and Collagen quality control.</title>
        <authorList>
            <person name="Reggio A."/>
            <person name="Buonomo V."/>
            <person name="Berkane R."/>
            <person name="Bhaskara R.M."/>
            <person name="Tellechea M."/>
            <person name="Peluso I."/>
            <person name="Polishchuk E."/>
            <person name="Di Lorenzo G."/>
            <person name="Cirillo C."/>
            <person name="Esposito M."/>
            <person name="Hussain A."/>
            <person name="Huebner A.K."/>
            <person name="Huebner C.A."/>
            <person name="Settembre C."/>
            <person name="Hummer G."/>
            <person name="Grumati P."/>
            <person name="Stolz A."/>
        </authorList>
    </citation>
    <scope>INTERACTION WITH RETREG1; RETREG2 AND RETREG3</scope>
</reference>
<reference key="22">
    <citation type="journal article" date="2021" name="Mol. Cell">
        <title>Non-canonical autophagy drives alternative ATG8 conjugation to phosphatidylserine.</title>
        <authorList>
            <person name="Durgan J."/>
            <person name="Lystad A.H."/>
            <person name="Sloan K."/>
            <person name="Carlsson S.R."/>
            <person name="Wilson M.I."/>
            <person name="Marcassa E."/>
            <person name="Ulferts R."/>
            <person name="Webster J."/>
            <person name="Lopez-Clavijo A.F."/>
            <person name="Wakelam M.J."/>
            <person name="Beale R."/>
            <person name="Simonsen A."/>
            <person name="Oxley D."/>
            <person name="Florey O."/>
        </authorList>
    </citation>
    <scope>LIPIDATION AT GLY-126</scope>
</reference>
<reference key="23">
    <citation type="journal article" date="2023" name="Nat. Cell Biol.">
        <title>The Troyer syndrome protein spartin mediates selective autophagy of lipid droplets.</title>
        <authorList>
            <person name="Chung J."/>
            <person name="Park J."/>
            <person name="Lai Z.W."/>
            <person name="Lambert T.J."/>
            <person name="Richards R.C."/>
            <person name="Zhang J."/>
            <person name="Walther T.C."/>
            <person name="Farese R.V. Jr."/>
        </authorList>
    </citation>
    <scope>INTERACTION WITH SPART</scope>
</reference>
<reference key="24">
    <citation type="journal article" date="2012" name="Mol. Cell">
        <title>LC3C, bound selectively by a noncanonical LIR motif in NDP52, is required for antibacterial autophagy.</title>
        <authorList>
            <person name="von Muhlinen N."/>
            <person name="Akutsu M."/>
            <person name="Ravenhill B.J."/>
            <person name="Foeglein A."/>
            <person name="Bloor S."/>
            <person name="Rutherford T.J."/>
            <person name="Freund S.M."/>
            <person name="Komander D."/>
            <person name="Randow F."/>
        </authorList>
    </citation>
    <scope>X-RAY CRYSTALLOGRAPHY (2.5 ANGSTROMS) OF 1-126 IN COMPLEX WITH CALCOCO2</scope>
    <scope>INTERACTION WITH CALCOCO2</scope>
    <scope>FUNCTION</scope>
</reference>
<reference key="25">
    <citation type="journal article" date="2014" name="Structure">
        <title>Structural basis of the autophagy-related LC3/Atg13 LIR complex: recognition and interaction mechanism.</title>
        <authorList>
            <person name="Suzuki H."/>
            <person name="Tabata K."/>
            <person name="Morita E."/>
            <person name="Kawasaki M."/>
            <person name="Kato R."/>
            <person name="Dobson R.C."/>
            <person name="Yoshimori T."/>
            <person name="Wakatsuki S."/>
        </authorList>
    </citation>
    <scope>X-RAY CRYSTALLOGRAPHY (1.75 ANGSTROMS) OF 8-125</scope>
    <scope>INTERACTION WITH ATG13</scope>
</reference>
<protein>
    <recommendedName>
        <fullName>Microtubule-associated protein 1 light chain 3 gamma</fullName>
    </recommendedName>
    <alternativeName>
        <fullName>Autophagy-related protein LC3 C</fullName>
    </alternativeName>
    <alternativeName>
        <fullName>Autophagy-related ubiquitin-like modifier LC3 C</fullName>
    </alternativeName>
    <alternativeName>
        <fullName>MAP1 light chain 3-like protein 3</fullName>
    </alternativeName>
    <alternativeName>
        <fullName>Microtubule-associated proteins 1A/1B light chain 3C</fullName>
        <shortName>MAP1A/MAP1B LC3 C</shortName>
        <shortName>MAP1A/MAP1B light chain 3 C</shortName>
    </alternativeName>
</protein>
<name>MLP3C_HUMAN</name>